<name>CH10_RICCN</name>
<dbReference type="EMBL" id="AE006914">
    <property type="protein sequence ID" value="AAL03507.1"/>
    <property type="status" value="ALT_INIT"/>
    <property type="molecule type" value="Genomic_DNA"/>
</dbReference>
<dbReference type="PIR" id="A97821">
    <property type="entry name" value="A97821"/>
</dbReference>
<dbReference type="RefSeq" id="WP_004997871.1">
    <property type="nucleotide sequence ID" value="NC_003103.1"/>
</dbReference>
<dbReference type="SMR" id="Q92H03"/>
<dbReference type="KEGG" id="rco:RC0969"/>
<dbReference type="HOGENOM" id="CLU_132825_1_0_5"/>
<dbReference type="Proteomes" id="UP000000816">
    <property type="component" value="Chromosome"/>
</dbReference>
<dbReference type="GO" id="GO:0005737">
    <property type="term" value="C:cytoplasm"/>
    <property type="evidence" value="ECO:0007669"/>
    <property type="project" value="UniProtKB-SubCell"/>
</dbReference>
<dbReference type="GO" id="GO:0005524">
    <property type="term" value="F:ATP binding"/>
    <property type="evidence" value="ECO:0007669"/>
    <property type="project" value="InterPro"/>
</dbReference>
<dbReference type="GO" id="GO:0046872">
    <property type="term" value="F:metal ion binding"/>
    <property type="evidence" value="ECO:0007669"/>
    <property type="project" value="TreeGrafter"/>
</dbReference>
<dbReference type="GO" id="GO:0044183">
    <property type="term" value="F:protein folding chaperone"/>
    <property type="evidence" value="ECO:0007669"/>
    <property type="project" value="InterPro"/>
</dbReference>
<dbReference type="GO" id="GO:0051087">
    <property type="term" value="F:protein-folding chaperone binding"/>
    <property type="evidence" value="ECO:0007669"/>
    <property type="project" value="TreeGrafter"/>
</dbReference>
<dbReference type="GO" id="GO:0051082">
    <property type="term" value="F:unfolded protein binding"/>
    <property type="evidence" value="ECO:0007669"/>
    <property type="project" value="TreeGrafter"/>
</dbReference>
<dbReference type="GO" id="GO:0051085">
    <property type="term" value="P:chaperone cofactor-dependent protein refolding"/>
    <property type="evidence" value="ECO:0007669"/>
    <property type="project" value="TreeGrafter"/>
</dbReference>
<dbReference type="CDD" id="cd00320">
    <property type="entry name" value="cpn10"/>
    <property type="match status" value="1"/>
</dbReference>
<dbReference type="FunFam" id="2.30.33.40:FF:000001">
    <property type="entry name" value="10 kDa chaperonin"/>
    <property type="match status" value="1"/>
</dbReference>
<dbReference type="Gene3D" id="2.30.33.40">
    <property type="entry name" value="GroES chaperonin"/>
    <property type="match status" value="1"/>
</dbReference>
<dbReference type="HAMAP" id="MF_00580">
    <property type="entry name" value="CH10"/>
    <property type="match status" value="1"/>
</dbReference>
<dbReference type="InterPro" id="IPR020818">
    <property type="entry name" value="Chaperonin_GroES"/>
</dbReference>
<dbReference type="InterPro" id="IPR037124">
    <property type="entry name" value="Chaperonin_GroES_sf"/>
</dbReference>
<dbReference type="InterPro" id="IPR018369">
    <property type="entry name" value="Chaprnonin_Cpn10_CS"/>
</dbReference>
<dbReference type="InterPro" id="IPR011032">
    <property type="entry name" value="GroES-like_sf"/>
</dbReference>
<dbReference type="NCBIfam" id="NF001527">
    <property type="entry name" value="PRK00364.1-2"/>
    <property type="match status" value="1"/>
</dbReference>
<dbReference type="NCBIfam" id="NF001529">
    <property type="entry name" value="PRK00364.1-5"/>
    <property type="match status" value="1"/>
</dbReference>
<dbReference type="NCBIfam" id="NF001531">
    <property type="entry name" value="PRK00364.2-2"/>
    <property type="match status" value="1"/>
</dbReference>
<dbReference type="NCBIfam" id="NF001533">
    <property type="entry name" value="PRK00364.2-4"/>
    <property type="match status" value="1"/>
</dbReference>
<dbReference type="PANTHER" id="PTHR10772">
    <property type="entry name" value="10 KDA HEAT SHOCK PROTEIN"/>
    <property type="match status" value="1"/>
</dbReference>
<dbReference type="PANTHER" id="PTHR10772:SF63">
    <property type="entry name" value="20 KDA CHAPERONIN, CHLOROPLASTIC"/>
    <property type="match status" value="1"/>
</dbReference>
<dbReference type="Pfam" id="PF00166">
    <property type="entry name" value="Cpn10"/>
    <property type="match status" value="1"/>
</dbReference>
<dbReference type="PRINTS" id="PR00297">
    <property type="entry name" value="CHAPERONIN10"/>
</dbReference>
<dbReference type="SMART" id="SM00883">
    <property type="entry name" value="Cpn10"/>
    <property type="match status" value="1"/>
</dbReference>
<dbReference type="SUPFAM" id="SSF50129">
    <property type="entry name" value="GroES-like"/>
    <property type="match status" value="1"/>
</dbReference>
<dbReference type="PROSITE" id="PS00681">
    <property type="entry name" value="CHAPERONINS_CPN10"/>
    <property type="match status" value="1"/>
</dbReference>
<reference key="1">
    <citation type="journal article" date="2001" name="Science">
        <title>Mechanisms of evolution in Rickettsia conorii and R. prowazekii.</title>
        <authorList>
            <person name="Ogata H."/>
            <person name="Audic S."/>
            <person name="Renesto-Audiffren P."/>
            <person name="Fournier P.-E."/>
            <person name="Barbe V."/>
            <person name="Samson D."/>
            <person name="Roux V."/>
            <person name="Cossart P."/>
            <person name="Weissenbach J."/>
            <person name="Claverie J.-M."/>
            <person name="Raoult D."/>
        </authorList>
    </citation>
    <scope>NUCLEOTIDE SEQUENCE [LARGE SCALE GENOMIC DNA]</scope>
    <source>
        <strain>ATCC VR-613 / Malish 7</strain>
    </source>
</reference>
<comment type="function">
    <text evidence="1">Together with the chaperonin GroEL, plays an essential role in assisting protein folding. The GroEL-GroES system forms a nano-cage that allows encapsulation of the non-native substrate proteins and provides a physical environment optimized to promote and accelerate protein folding. GroES binds to the apical surface of the GroEL ring, thereby capping the opening of the GroEL channel.</text>
</comment>
<comment type="subunit">
    <text evidence="1">Heptamer of 7 subunits arranged in a ring. Interacts with the chaperonin GroEL.</text>
</comment>
<comment type="subcellular location">
    <subcellularLocation>
        <location evidence="1">Cytoplasm</location>
    </subcellularLocation>
</comment>
<comment type="similarity">
    <text evidence="1 2">Belongs to the GroES chaperonin family.</text>
</comment>
<comment type="sequence caution" evidence="2">
    <conflict type="erroneous initiation">
        <sequence resource="EMBL-CDS" id="AAL03507"/>
    </conflict>
</comment>
<sequence>MSFKPLHDRIAIKPIEQEEKTKGGIIIPDTVKEKPMQGEIVAVGNGIRNEKGEIHPLELKVGDKVLYGKWAGTEIEIKGTKLIVMKESDVFGIIN</sequence>
<feature type="chain" id="PRO_0000174829" description="Co-chaperonin GroES">
    <location>
        <begin position="1"/>
        <end position="95"/>
    </location>
</feature>
<keyword id="KW-0143">Chaperone</keyword>
<keyword id="KW-0963">Cytoplasm</keyword>
<accession>Q92H03</accession>
<protein>
    <recommendedName>
        <fullName evidence="1">Co-chaperonin GroES</fullName>
    </recommendedName>
    <alternativeName>
        <fullName evidence="1">10 kDa chaperonin</fullName>
    </alternativeName>
    <alternativeName>
        <fullName evidence="1">Chaperonin-10</fullName>
        <shortName evidence="1">Cpn10</shortName>
    </alternativeName>
</protein>
<evidence type="ECO:0000255" key="1">
    <source>
        <dbReference type="HAMAP-Rule" id="MF_00580"/>
    </source>
</evidence>
<evidence type="ECO:0000305" key="2"/>
<gene>
    <name evidence="1" type="primary">groES</name>
    <name evidence="1" type="synonym">groS</name>
    <name type="synonym">mopB</name>
    <name type="ordered locus">RC0969</name>
</gene>
<proteinExistence type="inferred from homology"/>
<organism>
    <name type="scientific">Rickettsia conorii (strain ATCC VR-613 / Malish 7)</name>
    <dbReference type="NCBI Taxonomy" id="272944"/>
    <lineage>
        <taxon>Bacteria</taxon>
        <taxon>Pseudomonadati</taxon>
        <taxon>Pseudomonadota</taxon>
        <taxon>Alphaproteobacteria</taxon>
        <taxon>Rickettsiales</taxon>
        <taxon>Rickettsiaceae</taxon>
        <taxon>Rickettsieae</taxon>
        <taxon>Rickettsia</taxon>
        <taxon>spotted fever group</taxon>
    </lineage>
</organism>